<protein>
    <recommendedName>
        <fullName>U9-barytoxin-Tl1a</fullName>
        <shortName>U9-BATX-Tl1a</shortName>
    </recommendedName>
    <alternativeName>
        <fullName evidence="3">Toxin ICK-2</fullName>
    </alternativeName>
</protein>
<reference key="1">
    <citation type="journal article" date="2013" name="Toxins">
        <title>A proteomics and transcriptomics investigation of the venom from the barychelid spider Trittame loki (brush-foot trapdoor).</title>
        <authorList>
            <person name="Undheim E.A."/>
            <person name="Sunagar K."/>
            <person name="Herzig V."/>
            <person name="Kely L."/>
            <person name="Low D.H."/>
            <person name="Jackson T.N."/>
            <person name="Jones A."/>
            <person name="Kurniawan N."/>
            <person name="King G.F."/>
            <person name="Ali S.A."/>
            <person name="Antunes A."/>
            <person name="Ruder T."/>
            <person name="Fry B.G."/>
        </authorList>
    </citation>
    <scope>NUCLEOTIDE SEQUENCE [MRNA]</scope>
    <source>
        <tissue>Venom gland</tissue>
    </source>
</reference>
<accession>W4VRY9</accession>
<organism>
    <name type="scientific">Trittame loki</name>
    <name type="common">Brush-footed trapdoor spider</name>
    <dbReference type="NCBI Taxonomy" id="1295018"/>
    <lineage>
        <taxon>Eukaryota</taxon>
        <taxon>Metazoa</taxon>
        <taxon>Ecdysozoa</taxon>
        <taxon>Arthropoda</taxon>
        <taxon>Chelicerata</taxon>
        <taxon>Arachnida</taxon>
        <taxon>Araneae</taxon>
        <taxon>Mygalomorphae</taxon>
        <taxon>Barychelidae</taxon>
        <taxon>Trittame</taxon>
    </lineage>
</organism>
<sequence>MNTMITFLVLFVLTAANGAPEANERKIPEAIHNEDQSLAEMAEELMFFLQQTEFEAPLLQEEEEAEXAEXRNSRERRCAMGDVPCTKGKTNCCKGYECKPKSPAWWYDTDFCQSIHSGRPIGI</sequence>
<evidence type="ECO:0000250" key="1"/>
<evidence type="ECO:0000255" key="2"/>
<evidence type="ECO:0000303" key="3">
    <source>
    </source>
</evidence>
<evidence type="ECO:0000305" key="4"/>
<dbReference type="EMBL" id="GAQE01000005">
    <property type="protein sequence ID" value="JAB84549.1"/>
    <property type="molecule type" value="Transcribed_RNA"/>
</dbReference>
<dbReference type="ArachnoServer" id="AS001969">
    <property type="toxin name" value="U9-barytoxin-Tl1a"/>
</dbReference>
<dbReference type="GO" id="GO:0005576">
    <property type="term" value="C:extracellular region"/>
    <property type="evidence" value="ECO:0007669"/>
    <property type="project" value="UniProtKB-SubCell"/>
</dbReference>
<dbReference type="GO" id="GO:0099106">
    <property type="term" value="F:ion channel regulator activity"/>
    <property type="evidence" value="ECO:0007669"/>
    <property type="project" value="UniProtKB-KW"/>
</dbReference>
<dbReference type="GO" id="GO:0090729">
    <property type="term" value="F:toxin activity"/>
    <property type="evidence" value="ECO:0007669"/>
    <property type="project" value="UniProtKB-KW"/>
</dbReference>
<name>ICK2_TRILK</name>
<proteinExistence type="evidence at transcript level"/>
<keyword id="KW-0165">Cleavage on pair of basic residues</keyword>
<keyword id="KW-1015">Disulfide bond</keyword>
<keyword id="KW-0872">Ion channel impairing toxin</keyword>
<keyword id="KW-0960">Knottin</keyword>
<keyword id="KW-0964">Secreted</keyword>
<keyword id="KW-0732">Signal</keyword>
<keyword id="KW-0800">Toxin</keyword>
<feature type="signal peptide" evidence="2">
    <location>
        <begin position="1"/>
        <end position="18"/>
    </location>
</feature>
<feature type="propeptide" id="PRO_0000435146" evidence="4">
    <location>
        <begin position="19"/>
        <end position="77"/>
    </location>
</feature>
<feature type="chain" id="PRO_0000429209" description="U9-barytoxin-Tl1a">
    <location>
        <begin position="78"/>
        <end position="123"/>
    </location>
</feature>
<feature type="disulfide bond" evidence="1">
    <location>
        <begin position="78"/>
        <end position="93"/>
    </location>
</feature>
<feature type="disulfide bond" evidence="1">
    <location>
        <begin position="85"/>
        <end position="98"/>
    </location>
</feature>
<feature type="disulfide bond" evidence="1">
    <location>
        <begin position="92"/>
        <end position="112"/>
    </location>
</feature>
<comment type="function">
    <text evidence="4">Ion channel inhibitor.</text>
</comment>
<comment type="subcellular location">
    <subcellularLocation>
        <location evidence="1">Secreted</location>
    </subcellularLocation>
</comment>
<comment type="tissue specificity">
    <text>Expressed by the venom gland.</text>
</comment>
<comment type="domain">
    <text evidence="1">The presence of a 'disulfide through disulfide knot' structurally defines this protein as a knottin.</text>
</comment>
<comment type="similarity">
    <text evidence="4">Belongs to the neurotoxin 14 (magi-1) family. 05 (ICK-7) subfamily. ICK-7 sub-subfamily.</text>
</comment>